<feature type="transit peptide" description="Mitochondrion" evidence="3">
    <location>
        <begin position="1"/>
        <end position="34"/>
    </location>
</feature>
<feature type="chain" id="PRO_0000273240" description="Large ribosomal subunit protein uL30m">
    <location>
        <begin position="35"/>
        <end position="160"/>
    </location>
</feature>
<feature type="region of interest" description="Disordered" evidence="2">
    <location>
        <begin position="45"/>
        <end position="64"/>
    </location>
</feature>
<reference key="1">
    <citation type="journal article" date="2004" name="Nature">
        <title>Genome sequence of the Brown Norway rat yields insights into mammalian evolution.</title>
        <authorList>
            <person name="Gibbs R.A."/>
            <person name="Weinstock G.M."/>
            <person name="Metzker M.L."/>
            <person name="Muzny D.M."/>
            <person name="Sodergren E.J."/>
            <person name="Scherer S."/>
            <person name="Scott G."/>
            <person name="Steffen D."/>
            <person name="Worley K.C."/>
            <person name="Burch P.E."/>
            <person name="Okwuonu G."/>
            <person name="Hines S."/>
            <person name="Lewis L."/>
            <person name="Deramo C."/>
            <person name="Delgado O."/>
            <person name="Dugan-Rocha S."/>
            <person name="Miner G."/>
            <person name="Morgan M."/>
            <person name="Hawes A."/>
            <person name="Gill R."/>
            <person name="Holt R.A."/>
            <person name="Adams M.D."/>
            <person name="Amanatides P.G."/>
            <person name="Baden-Tillson H."/>
            <person name="Barnstead M."/>
            <person name="Chin S."/>
            <person name="Evans C.A."/>
            <person name="Ferriera S."/>
            <person name="Fosler C."/>
            <person name="Glodek A."/>
            <person name="Gu Z."/>
            <person name="Jennings D."/>
            <person name="Kraft C.L."/>
            <person name="Nguyen T."/>
            <person name="Pfannkoch C.M."/>
            <person name="Sitter C."/>
            <person name="Sutton G.G."/>
            <person name="Venter J.C."/>
            <person name="Woodage T."/>
            <person name="Smith D."/>
            <person name="Lee H.-M."/>
            <person name="Gustafson E."/>
            <person name="Cahill P."/>
            <person name="Kana A."/>
            <person name="Doucette-Stamm L."/>
            <person name="Weinstock K."/>
            <person name="Fechtel K."/>
            <person name="Weiss R.B."/>
            <person name="Dunn D.M."/>
            <person name="Green E.D."/>
            <person name="Blakesley R.W."/>
            <person name="Bouffard G.G."/>
            <person name="De Jong P.J."/>
            <person name="Osoegawa K."/>
            <person name="Zhu B."/>
            <person name="Marra M."/>
            <person name="Schein J."/>
            <person name="Bosdet I."/>
            <person name="Fjell C."/>
            <person name="Jones S."/>
            <person name="Krzywinski M."/>
            <person name="Mathewson C."/>
            <person name="Siddiqui A."/>
            <person name="Wye N."/>
            <person name="McPherson J."/>
            <person name="Zhao S."/>
            <person name="Fraser C.M."/>
            <person name="Shetty J."/>
            <person name="Shatsman S."/>
            <person name="Geer K."/>
            <person name="Chen Y."/>
            <person name="Abramzon S."/>
            <person name="Nierman W.C."/>
            <person name="Havlak P.H."/>
            <person name="Chen R."/>
            <person name="Durbin K.J."/>
            <person name="Egan A."/>
            <person name="Ren Y."/>
            <person name="Song X.-Z."/>
            <person name="Li B."/>
            <person name="Liu Y."/>
            <person name="Qin X."/>
            <person name="Cawley S."/>
            <person name="Cooney A.J."/>
            <person name="D'Souza L.M."/>
            <person name="Martin K."/>
            <person name="Wu J.Q."/>
            <person name="Gonzalez-Garay M.L."/>
            <person name="Jackson A.R."/>
            <person name="Kalafus K.J."/>
            <person name="McLeod M.P."/>
            <person name="Milosavljevic A."/>
            <person name="Virk D."/>
            <person name="Volkov A."/>
            <person name="Wheeler D.A."/>
            <person name="Zhang Z."/>
            <person name="Bailey J.A."/>
            <person name="Eichler E.E."/>
            <person name="Tuzun E."/>
            <person name="Birney E."/>
            <person name="Mongin E."/>
            <person name="Ureta-Vidal A."/>
            <person name="Woodwark C."/>
            <person name="Zdobnov E."/>
            <person name="Bork P."/>
            <person name="Suyama M."/>
            <person name="Torrents D."/>
            <person name="Alexandersson M."/>
            <person name="Trask B.J."/>
            <person name="Young J.M."/>
            <person name="Huang H."/>
            <person name="Wang H."/>
            <person name="Xing H."/>
            <person name="Daniels S."/>
            <person name="Gietzen D."/>
            <person name="Schmidt J."/>
            <person name="Stevens K."/>
            <person name="Vitt U."/>
            <person name="Wingrove J."/>
            <person name="Camara F."/>
            <person name="Mar Alba M."/>
            <person name="Abril J.F."/>
            <person name="Guigo R."/>
            <person name="Smit A."/>
            <person name="Dubchak I."/>
            <person name="Rubin E.M."/>
            <person name="Couronne O."/>
            <person name="Poliakov A."/>
            <person name="Huebner N."/>
            <person name="Ganten D."/>
            <person name="Goesele C."/>
            <person name="Hummel O."/>
            <person name="Kreitler T."/>
            <person name="Lee Y.-A."/>
            <person name="Monti J."/>
            <person name="Schulz H."/>
            <person name="Zimdahl H."/>
            <person name="Himmelbauer H."/>
            <person name="Lehrach H."/>
            <person name="Jacob H.J."/>
            <person name="Bromberg S."/>
            <person name="Gullings-Handley J."/>
            <person name="Jensen-Seaman M.I."/>
            <person name="Kwitek A.E."/>
            <person name="Lazar J."/>
            <person name="Pasko D."/>
            <person name="Tonellato P.J."/>
            <person name="Twigger S."/>
            <person name="Ponting C.P."/>
            <person name="Duarte J.M."/>
            <person name="Rice S."/>
            <person name="Goodstadt L."/>
            <person name="Beatson S.A."/>
            <person name="Emes R.D."/>
            <person name="Winter E.E."/>
            <person name="Webber C."/>
            <person name="Brandt P."/>
            <person name="Nyakatura G."/>
            <person name="Adetobi M."/>
            <person name="Chiaromonte F."/>
            <person name="Elnitski L."/>
            <person name="Eswara P."/>
            <person name="Hardison R.C."/>
            <person name="Hou M."/>
            <person name="Kolbe D."/>
            <person name="Makova K."/>
            <person name="Miller W."/>
            <person name="Nekrutenko A."/>
            <person name="Riemer C."/>
            <person name="Schwartz S."/>
            <person name="Taylor J."/>
            <person name="Yang S."/>
            <person name="Zhang Y."/>
            <person name="Lindpaintner K."/>
            <person name="Andrews T.D."/>
            <person name="Caccamo M."/>
            <person name="Clamp M."/>
            <person name="Clarke L."/>
            <person name="Curwen V."/>
            <person name="Durbin R.M."/>
            <person name="Eyras E."/>
            <person name="Searle S.M."/>
            <person name="Cooper G.M."/>
            <person name="Batzoglou S."/>
            <person name="Brudno M."/>
            <person name="Sidow A."/>
            <person name="Stone E.A."/>
            <person name="Payseur B.A."/>
            <person name="Bourque G."/>
            <person name="Lopez-Otin C."/>
            <person name="Puente X.S."/>
            <person name="Chakrabarti K."/>
            <person name="Chatterji S."/>
            <person name="Dewey C."/>
            <person name="Pachter L."/>
            <person name="Bray N."/>
            <person name="Yap V.B."/>
            <person name="Caspi A."/>
            <person name="Tesler G."/>
            <person name="Pevzner P.A."/>
            <person name="Haussler D."/>
            <person name="Roskin K.M."/>
            <person name="Baertsch R."/>
            <person name="Clawson H."/>
            <person name="Furey T.S."/>
            <person name="Hinrichs A.S."/>
            <person name="Karolchik D."/>
            <person name="Kent W.J."/>
            <person name="Rosenbloom K.R."/>
            <person name="Trumbower H."/>
            <person name="Weirauch M."/>
            <person name="Cooper D.N."/>
            <person name="Stenson P.D."/>
            <person name="Ma B."/>
            <person name="Brent M."/>
            <person name="Arumugam M."/>
            <person name="Shteynberg D."/>
            <person name="Copley R.R."/>
            <person name="Taylor M.S."/>
            <person name="Riethman H."/>
            <person name="Mudunuri U."/>
            <person name="Peterson J."/>
            <person name="Guyer M."/>
            <person name="Felsenfeld A."/>
            <person name="Old S."/>
            <person name="Mockrin S."/>
            <person name="Collins F.S."/>
        </authorList>
    </citation>
    <scope>NUCLEOTIDE SEQUENCE [LARGE SCALE GENOMIC DNA]</scope>
    <source>
        <strain>Brown Norway</strain>
    </source>
</reference>
<reference key="2">
    <citation type="journal article" date="1998" name="J. Biol. Chem.">
        <title>Mammalian mitochondrial ribosomal proteins. N-terminal amino acid sequencing, characterization, and identification of corresponding gene sequences.</title>
        <authorList>
            <person name="Goldschmidt-Reisin S."/>
            <person name="Kitakawa M."/>
            <person name="Herfurth E."/>
            <person name="Wittmann-Liebold B."/>
            <person name="Grohmann L."/>
            <person name="Graack H.-R."/>
        </authorList>
    </citation>
    <scope>PROTEIN SEQUENCE OF 35-55</scope>
    <scope>SUBCELLULAR LOCATION</scope>
</reference>
<evidence type="ECO:0000250" key="1">
    <source>
        <dbReference type="UniProtKB" id="Q8TCC3"/>
    </source>
</evidence>
<evidence type="ECO:0000256" key="2">
    <source>
        <dbReference type="SAM" id="MobiDB-lite"/>
    </source>
</evidence>
<evidence type="ECO:0000269" key="3">
    <source>
    </source>
</evidence>
<evidence type="ECO:0000305" key="4"/>
<organism>
    <name type="scientific">Rattus norvegicus</name>
    <name type="common">Rat</name>
    <dbReference type="NCBI Taxonomy" id="10116"/>
    <lineage>
        <taxon>Eukaryota</taxon>
        <taxon>Metazoa</taxon>
        <taxon>Chordata</taxon>
        <taxon>Craniata</taxon>
        <taxon>Vertebrata</taxon>
        <taxon>Euteleostomi</taxon>
        <taxon>Mammalia</taxon>
        <taxon>Eutheria</taxon>
        <taxon>Euarchontoglires</taxon>
        <taxon>Glires</taxon>
        <taxon>Rodentia</taxon>
        <taxon>Myomorpha</taxon>
        <taxon>Muroidea</taxon>
        <taxon>Muridae</taxon>
        <taxon>Murinae</taxon>
        <taxon>Rattus</taxon>
    </lineage>
</organism>
<dbReference type="EMBL" id="AABR03068288">
    <property type="status" value="NOT_ANNOTATED_CDS"/>
    <property type="molecule type" value="Genomic_DNA"/>
</dbReference>
<dbReference type="RefSeq" id="NP_001100373.1">
    <property type="nucleotide sequence ID" value="NM_001106903.2"/>
</dbReference>
<dbReference type="RefSeq" id="NP_001418919.1">
    <property type="nucleotide sequence ID" value="NM_001431990.1"/>
</dbReference>
<dbReference type="RefSeq" id="XP_008765221.1">
    <property type="nucleotide sequence ID" value="XM_008766999.2"/>
</dbReference>
<dbReference type="RefSeq" id="XP_008765278.1">
    <property type="nucleotide sequence ID" value="XM_008767056.2"/>
</dbReference>
<dbReference type="RefSeq" id="XP_008765279.1">
    <property type="nucleotide sequence ID" value="XM_008767057.2"/>
</dbReference>
<dbReference type="RefSeq" id="XP_017459345.1">
    <property type="nucleotide sequence ID" value="XM_017603856.1"/>
</dbReference>
<dbReference type="RefSeq" id="XP_017459346.1">
    <property type="nucleotide sequence ID" value="XM_017603857.1"/>
</dbReference>
<dbReference type="RefSeq" id="XP_038939152.1">
    <property type="nucleotide sequence ID" value="XM_039083224.2"/>
</dbReference>
<dbReference type="SMR" id="P0C2C1"/>
<dbReference type="FunCoup" id="P0C2C1">
    <property type="interactions" value="1806"/>
</dbReference>
<dbReference type="STRING" id="10116.ENSRNOP00000067807"/>
<dbReference type="PhosphoSitePlus" id="P0C2C1"/>
<dbReference type="PaxDb" id="10116-ENSRNOP00000024990"/>
<dbReference type="Ensembl" id="ENSRNOT00000075242.3">
    <property type="protein sequence ID" value="ENSRNOP00000067807.3"/>
    <property type="gene ID" value="ENSRNOG00000049330.3"/>
</dbReference>
<dbReference type="GeneID" id="301352"/>
<dbReference type="KEGG" id="rno:301352"/>
<dbReference type="UCSC" id="RGD:1308196">
    <property type="organism name" value="rat"/>
</dbReference>
<dbReference type="AGR" id="RGD:1308196"/>
<dbReference type="CTD" id="51263"/>
<dbReference type="RGD" id="1308196">
    <property type="gene designation" value="Mrpl30"/>
</dbReference>
<dbReference type="eggNOG" id="KOG4799">
    <property type="taxonomic scope" value="Eukaryota"/>
</dbReference>
<dbReference type="GeneTree" id="ENSGT00390000016769"/>
<dbReference type="InParanoid" id="P0C2C1"/>
<dbReference type="OMA" id="VESFICT"/>
<dbReference type="OrthoDB" id="22722at9989"/>
<dbReference type="PhylomeDB" id="P0C2C1"/>
<dbReference type="TreeFam" id="TF314611"/>
<dbReference type="Reactome" id="R-RNO-5389840">
    <property type="pathway name" value="Mitochondrial translation elongation"/>
</dbReference>
<dbReference type="Reactome" id="R-RNO-5419276">
    <property type="pathway name" value="Mitochondrial translation termination"/>
</dbReference>
<dbReference type="PRO" id="PR:P0C2C1"/>
<dbReference type="Proteomes" id="UP000002494">
    <property type="component" value="Chromosome 9"/>
</dbReference>
<dbReference type="Bgee" id="ENSRNOG00000049330">
    <property type="expression patterns" value="Expressed in heart and 20 other cell types or tissues"/>
</dbReference>
<dbReference type="ExpressionAtlas" id="P0C2C1">
    <property type="expression patterns" value="baseline and differential"/>
</dbReference>
<dbReference type="GO" id="GO:0005762">
    <property type="term" value="C:mitochondrial large ribosomal subunit"/>
    <property type="evidence" value="ECO:0000250"/>
    <property type="project" value="UniProtKB"/>
</dbReference>
<dbReference type="GO" id="GO:0005739">
    <property type="term" value="C:mitochondrion"/>
    <property type="evidence" value="ECO:0000266"/>
    <property type="project" value="RGD"/>
</dbReference>
<dbReference type="GO" id="GO:0003735">
    <property type="term" value="F:structural constituent of ribosome"/>
    <property type="evidence" value="ECO:0007669"/>
    <property type="project" value="InterPro"/>
</dbReference>
<dbReference type="GO" id="GO:0006412">
    <property type="term" value="P:translation"/>
    <property type="evidence" value="ECO:0007669"/>
    <property type="project" value="InterPro"/>
</dbReference>
<dbReference type="CDD" id="cd01658">
    <property type="entry name" value="Ribosomal_L30"/>
    <property type="match status" value="1"/>
</dbReference>
<dbReference type="FunFam" id="3.30.1390.20:FF:000005">
    <property type="entry name" value="39S ribosomal protein L30, mitochondrial"/>
    <property type="match status" value="1"/>
</dbReference>
<dbReference type="Gene3D" id="3.30.1390.20">
    <property type="entry name" value="Ribosomal protein L30, ferredoxin-like fold domain"/>
    <property type="match status" value="1"/>
</dbReference>
<dbReference type="InterPro" id="IPR036919">
    <property type="entry name" value="Ribo_uL30_ferredoxin-like_sf"/>
</dbReference>
<dbReference type="InterPro" id="IPR005996">
    <property type="entry name" value="Ribosomal_uL30_bac-type"/>
</dbReference>
<dbReference type="InterPro" id="IPR016082">
    <property type="entry name" value="Ribosomal_uL30_ferredoxin-like"/>
</dbReference>
<dbReference type="PANTHER" id="PTHR15892:SF2">
    <property type="entry name" value="LARGE RIBOSOMAL SUBUNIT PROTEIN UL30M"/>
    <property type="match status" value="1"/>
</dbReference>
<dbReference type="PANTHER" id="PTHR15892">
    <property type="entry name" value="MITOCHONDRIAL RIBOSOMAL PROTEIN L30"/>
    <property type="match status" value="1"/>
</dbReference>
<dbReference type="Pfam" id="PF00327">
    <property type="entry name" value="Ribosomal_L30"/>
    <property type="match status" value="1"/>
</dbReference>
<dbReference type="SUPFAM" id="SSF55129">
    <property type="entry name" value="Ribosomal protein L30p/L7e"/>
    <property type="match status" value="1"/>
</dbReference>
<protein>
    <recommendedName>
        <fullName evidence="4">Large ribosomal subunit protein uL30m</fullName>
    </recommendedName>
    <alternativeName>
        <fullName>39S ribosomal protein L30, mitochondrial</fullName>
        <shortName>L30mt</shortName>
        <shortName>MRP-L30</shortName>
    </alternativeName>
</protein>
<gene>
    <name type="primary">Mrpl30</name>
</gene>
<comment type="subunit">
    <text evidence="1">Component of the mitochondrial ribosome large subunit (39S) which comprises a 16S rRNA and about 50 distinct proteins.</text>
</comment>
<comment type="subcellular location">
    <subcellularLocation>
        <location evidence="3">Mitochondrion</location>
    </subcellularLocation>
</comment>
<comment type="similarity">
    <text evidence="4">Belongs to the universal ribosomal protein uL30 family.</text>
</comment>
<name>RM30_RAT</name>
<keyword id="KW-0903">Direct protein sequencing</keyword>
<keyword id="KW-0496">Mitochondrion</keyword>
<keyword id="KW-1185">Reference proteome</keyword>
<keyword id="KW-0687">Ribonucleoprotein</keyword>
<keyword id="KW-0689">Ribosomal protein</keyword>
<keyword id="KW-0809">Transit peptide</keyword>
<proteinExistence type="evidence at protein level"/>
<accession>P0C2C1</accession>
<sequence>MAGVLRSVFQRPPGRLQTVKKGAESLIGTEWIRHKFTRSRIPDKVFQPRPEDHEKYGGDPQNPHKLHIVTRIRSTKRRPYWEKDTIKMLGLQKAHSPQIHKNIPSVNAKLKVVKHLIRIQPLKLPQGLPTEETMSSTCLKSTGELVVQWHLKPVEQEAKS</sequence>